<protein>
    <recommendedName>
        <fullName evidence="1">Ribonuclease VapC17</fullName>
        <shortName evidence="1">RNase VapC17</shortName>
        <ecNumber evidence="1">3.1.-.-</ecNumber>
    </recommendedName>
    <alternativeName>
        <fullName evidence="1">Toxin VapC17</fullName>
    </alternativeName>
</protein>
<comment type="function">
    <text evidence="1">Toxic component of a type II toxin-antitoxin (TA) system. An RNase. The cognate antitoxin is VapB17 (By similarity).</text>
</comment>
<comment type="cofactor">
    <cofactor evidence="1">
        <name>Mg(2+)</name>
        <dbReference type="ChEBI" id="CHEBI:18420"/>
    </cofactor>
</comment>
<comment type="similarity">
    <text evidence="1">Belongs to the PINc/VapC protein family.</text>
</comment>
<dbReference type="EC" id="3.1.-.-" evidence="1"/>
<dbReference type="EMBL" id="AE000516">
    <property type="protein sequence ID" value="AAK46912.1"/>
    <property type="molecule type" value="Genomic_DNA"/>
</dbReference>
<dbReference type="PIR" id="C70657">
    <property type="entry name" value="C70657"/>
</dbReference>
<dbReference type="RefSeq" id="WP_003412963.1">
    <property type="nucleotide sequence ID" value="NZ_KK341227.1"/>
</dbReference>
<dbReference type="SMR" id="P9WF94"/>
<dbReference type="KEGG" id="mtc:MT2602"/>
<dbReference type="PATRIC" id="fig|83331.31.peg.2806"/>
<dbReference type="HOGENOM" id="CLU_118482_4_0_11"/>
<dbReference type="Proteomes" id="UP000001020">
    <property type="component" value="Chromosome"/>
</dbReference>
<dbReference type="GO" id="GO:0000287">
    <property type="term" value="F:magnesium ion binding"/>
    <property type="evidence" value="ECO:0007669"/>
    <property type="project" value="UniProtKB-UniRule"/>
</dbReference>
<dbReference type="GO" id="GO:0004540">
    <property type="term" value="F:RNA nuclease activity"/>
    <property type="evidence" value="ECO:0007669"/>
    <property type="project" value="InterPro"/>
</dbReference>
<dbReference type="Gene3D" id="3.40.50.1010">
    <property type="entry name" value="5'-nuclease"/>
    <property type="match status" value="1"/>
</dbReference>
<dbReference type="HAMAP" id="MF_00265">
    <property type="entry name" value="VapC_Nob1"/>
    <property type="match status" value="1"/>
</dbReference>
<dbReference type="InterPro" id="IPR029060">
    <property type="entry name" value="PIN-like_dom_sf"/>
</dbReference>
<dbReference type="InterPro" id="IPR002716">
    <property type="entry name" value="PIN_dom"/>
</dbReference>
<dbReference type="InterPro" id="IPR050556">
    <property type="entry name" value="Type_II_TA_system_RNase"/>
</dbReference>
<dbReference type="InterPro" id="IPR022907">
    <property type="entry name" value="VapC_family"/>
</dbReference>
<dbReference type="PANTHER" id="PTHR33653">
    <property type="entry name" value="RIBONUCLEASE VAPC2"/>
    <property type="match status" value="1"/>
</dbReference>
<dbReference type="PANTHER" id="PTHR33653:SF1">
    <property type="entry name" value="RIBONUCLEASE VAPC2"/>
    <property type="match status" value="1"/>
</dbReference>
<dbReference type="Pfam" id="PF01850">
    <property type="entry name" value="PIN"/>
    <property type="match status" value="1"/>
</dbReference>
<dbReference type="SUPFAM" id="SSF88723">
    <property type="entry name" value="PIN domain-like"/>
    <property type="match status" value="1"/>
</dbReference>
<keyword id="KW-0378">Hydrolase</keyword>
<keyword id="KW-0460">Magnesium</keyword>
<keyword id="KW-0479">Metal-binding</keyword>
<keyword id="KW-0540">Nuclease</keyword>
<keyword id="KW-1185">Reference proteome</keyword>
<keyword id="KW-1277">Toxin-antitoxin system</keyword>
<name>VPC17_MYCTO</name>
<evidence type="ECO:0000255" key="1">
    <source>
        <dbReference type="HAMAP-Rule" id="MF_00265"/>
    </source>
</evidence>
<accession>P9WF94</accession>
<accession>L0TA20</accession>
<accession>P95026</accession>
<accession>Q7D6Z0</accession>
<gene>
    <name evidence="1" type="primary">vapC17</name>
    <name type="ordered locus">MT2602</name>
</gene>
<organism>
    <name type="scientific">Mycobacterium tuberculosis (strain CDC 1551 / Oshkosh)</name>
    <dbReference type="NCBI Taxonomy" id="83331"/>
    <lineage>
        <taxon>Bacteria</taxon>
        <taxon>Bacillati</taxon>
        <taxon>Actinomycetota</taxon>
        <taxon>Actinomycetes</taxon>
        <taxon>Mycobacteriales</taxon>
        <taxon>Mycobacteriaceae</taxon>
        <taxon>Mycobacterium</taxon>
        <taxon>Mycobacterium tuberculosis complex</taxon>
    </lineage>
</organism>
<sequence>MTTWILDKSAHVRLVAGATPPAGIDLTDLAICDIGELEWLYSARSATDYDSQQTSLRAYQILRAPSDIFDRVRHLQRDLAHHRGMWHRTPLPDLFIAETALHHRAGVLHHDRDYKRIAVVRPGFQACELSRGR</sequence>
<proteinExistence type="inferred from homology"/>
<reference key="1">
    <citation type="journal article" date="2002" name="J. Bacteriol.">
        <title>Whole-genome comparison of Mycobacterium tuberculosis clinical and laboratory strains.</title>
        <authorList>
            <person name="Fleischmann R.D."/>
            <person name="Alland D."/>
            <person name="Eisen J.A."/>
            <person name="Carpenter L."/>
            <person name="White O."/>
            <person name="Peterson J.D."/>
            <person name="DeBoy R.T."/>
            <person name="Dodson R.J."/>
            <person name="Gwinn M.L."/>
            <person name="Haft D.H."/>
            <person name="Hickey E.K."/>
            <person name="Kolonay J.F."/>
            <person name="Nelson W.C."/>
            <person name="Umayam L.A."/>
            <person name="Ermolaeva M.D."/>
            <person name="Salzberg S.L."/>
            <person name="Delcher A."/>
            <person name="Utterback T.R."/>
            <person name="Weidman J.F."/>
            <person name="Khouri H.M."/>
            <person name="Gill J."/>
            <person name="Mikula A."/>
            <person name="Bishai W."/>
            <person name="Jacobs W.R. Jr."/>
            <person name="Venter J.C."/>
            <person name="Fraser C.M."/>
        </authorList>
    </citation>
    <scope>NUCLEOTIDE SEQUENCE [LARGE SCALE GENOMIC DNA]</scope>
    <source>
        <strain>CDC 1551 / Oshkosh</strain>
    </source>
</reference>
<feature type="chain" id="PRO_0000428578" description="Ribonuclease VapC17">
    <location>
        <begin position="1"/>
        <end position="133"/>
    </location>
</feature>
<feature type="domain" description="PINc" evidence="1">
    <location>
        <begin position="30"/>
        <end position="118"/>
    </location>
</feature>
<feature type="binding site" evidence="1">
    <location>
        <position position="7"/>
    </location>
    <ligand>
        <name>Mg(2+)</name>
        <dbReference type="ChEBI" id="CHEBI:18420"/>
    </ligand>
</feature>
<feature type="binding site" evidence="1">
    <location>
        <position position="93"/>
    </location>
    <ligand>
        <name>Mg(2+)</name>
        <dbReference type="ChEBI" id="CHEBI:18420"/>
    </ligand>
</feature>